<accession>Q13ZL9</accession>
<organism>
    <name type="scientific">Paraburkholderia xenovorans (strain LB400)</name>
    <dbReference type="NCBI Taxonomy" id="266265"/>
    <lineage>
        <taxon>Bacteria</taxon>
        <taxon>Pseudomonadati</taxon>
        <taxon>Pseudomonadota</taxon>
        <taxon>Betaproteobacteria</taxon>
        <taxon>Burkholderiales</taxon>
        <taxon>Burkholderiaceae</taxon>
        <taxon>Paraburkholderia</taxon>
    </lineage>
</organism>
<comment type="similarity">
    <text evidence="1">Belongs to the UPF0303 family.</text>
</comment>
<protein>
    <recommendedName>
        <fullName evidence="1">UPF0303 protein Bxeno_A1932</fullName>
    </recommendedName>
</protein>
<gene>
    <name type="ordered locus">Bxeno_A1932</name>
    <name type="ORF">Bxe_A2503</name>
</gene>
<sequence length="165" mass="17648">MDIAHDLQVIAAQEHALVFPQFDPDRAWQVGAYLHEVAKARGIPAAIDVRTFGQPLFFSLLDGATPDNVDWARRKGNTVAHFRRSSYAIGLKMQQAGSTLADKHGLPNTEYASHGGAFPLTVAGAGVIGSITVSGLPQRADHELVVEALCAHLGHDYSKLALAKA</sequence>
<proteinExistence type="inferred from homology"/>
<keyword id="KW-1185">Reference proteome</keyword>
<reference key="1">
    <citation type="journal article" date="2006" name="Proc. Natl. Acad. Sci. U.S.A.">
        <title>Burkholderia xenovorans LB400 harbors a multi-replicon, 9.73-Mbp genome shaped for versatility.</title>
        <authorList>
            <person name="Chain P.S.G."/>
            <person name="Denef V.J."/>
            <person name="Konstantinidis K.T."/>
            <person name="Vergez L.M."/>
            <person name="Agullo L."/>
            <person name="Reyes V.L."/>
            <person name="Hauser L."/>
            <person name="Cordova M."/>
            <person name="Gomez L."/>
            <person name="Gonzalez M."/>
            <person name="Land M."/>
            <person name="Lao V."/>
            <person name="Larimer F."/>
            <person name="LiPuma J.J."/>
            <person name="Mahenthiralingam E."/>
            <person name="Malfatti S.A."/>
            <person name="Marx C.J."/>
            <person name="Parnell J.J."/>
            <person name="Ramette A."/>
            <person name="Richardson P."/>
            <person name="Seeger M."/>
            <person name="Smith D."/>
            <person name="Spilker T."/>
            <person name="Sul W.J."/>
            <person name="Tsoi T.V."/>
            <person name="Ulrich L.E."/>
            <person name="Zhulin I.B."/>
            <person name="Tiedje J.M."/>
        </authorList>
    </citation>
    <scope>NUCLEOTIDE SEQUENCE [LARGE SCALE GENOMIC DNA]</scope>
    <source>
        <strain>LB400</strain>
    </source>
</reference>
<name>Y1932_PARXL</name>
<evidence type="ECO:0000255" key="1">
    <source>
        <dbReference type="HAMAP-Rule" id="MF_00761"/>
    </source>
</evidence>
<dbReference type="EMBL" id="CP000270">
    <property type="protein sequence ID" value="ABE30470.1"/>
    <property type="molecule type" value="Genomic_DNA"/>
</dbReference>
<dbReference type="RefSeq" id="WP_011488124.1">
    <property type="nucleotide sequence ID" value="NZ_CP008760.1"/>
</dbReference>
<dbReference type="SMR" id="Q13ZL9"/>
<dbReference type="KEGG" id="bxb:DR64_196"/>
<dbReference type="KEGG" id="bxe:Bxe_A2503"/>
<dbReference type="PATRIC" id="fig|266265.5.peg.2023"/>
<dbReference type="eggNOG" id="COG4702">
    <property type="taxonomic scope" value="Bacteria"/>
</dbReference>
<dbReference type="OrthoDB" id="9815315at2"/>
<dbReference type="Proteomes" id="UP000001817">
    <property type="component" value="Chromosome 1"/>
</dbReference>
<dbReference type="Gene3D" id="3.30.450.150">
    <property type="entry name" value="Haem-degrading domain"/>
    <property type="match status" value="1"/>
</dbReference>
<dbReference type="HAMAP" id="MF_00761">
    <property type="entry name" value="UPF0303"/>
    <property type="match status" value="1"/>
</dbReference>
<dbReference type="InterPro" id="IPR005624">
    <property type="entry name" value="PduO/GlcC-like"/>
</dbReference>
<dbReference type="InterPro" id="IPR038084">
    <property type="entry name" value="PduO/GlcC-like_sf"/>
</dbReference>
<dbReference type="InterPro" id="IPR010371">
    <property type="entry name" value="YBR137W-like"/>
</dbReference>
<dbReference type="NCBIfam" id="NF002695">
    <property type="entry name" value="PRK02487.1-4"/>
    <property type="match status" value="1"/>
</dbReference>
<dbReference type="NCBIfam" id="NF002696">
    <property type="entry name" value="PRK02487.1-5"/>
    <property type="match status" value="1"/>
</dbReference>
<dbReference type="PANTHER" id="PTHR28255">
    <property type="match status" value="1"/>
</dbReference>
<dbReference type="PANTHER" id="PTHR28255:SF1">
    <property type="entry name" value="UPF0303 PROTEIN YBR137W"/>
    <property type="match status" value="1"/>
</dbReference>
<dbReference type="Pfam" id="PF03928">
    <property type="entry name" value="HbpS-like"/>
    <property type="match status" value="1"/>
</dbReference>
<dbReference type="PIRSF" id="PIRSF008757">
    <property type="entry name" value="UCP008757"/>
    <property type="match status" value="1"/>
</dbReference>
<dbReference type="SUPFAM" id="SSF143744">
    <property type="entry name" value="GlcG-like"/>
    <property type="match status" value="1"/>
</dbReference>
<feature type="chain" id="PRO_1000046747" description="UPF0303 protein Bxeno_A1932">
    <location>
        <begin position="1"/>
        <end position="165"/>
    </location>
</feature>